<accession>Q47MD6</accession>
<reference key="1">
    <citation type="journal article" date="2007" name="J. Bacteriol.">
        <title>Genome sequence and analysis of the soil cellulolytic actinomycete Thermobifida fusca YX.</title>
        <authorList>
            <person name="Lykidis A."/>
            <person name="Mavromatis K."/>
            <person name="Ivanova N."/>
            <person name="Anderson I."/>
            <person name="Land M."/>
            <person name="DiBartolo G."/>
            <person name="Martinez M."/>
            <person name="Lapidus A."/>
            <person name="Lucas S."/>
            <person name="Copeland A."/>
            <person name="Richardson P."/>
            <person name="Wilson D.B."/>
            <person name="Kyrpides N."/>
        </authorList>
    </citation>
    <scope>NUCLEOTIDE SEQUENCE [LARGE SCALE GENOMIC DNA]</scope>
    <source>
        <strain>YX</strain>
    </source>
</reference>
<keyword id="KW-0028">Amino-acid biosynthesis</keyword>
<keyword id="KW-0963">Cytoplasm</keyword>
<keyword id="KW-0554">One-carbon metabolism</keyword>
<keyword id="KW-0663">Pyridoxal phosphate</keyword>
<keyword id="KW-0808">Transferase</keyword>
<gene>
    <name evidence="1" type="primary">glyA</name>
    <name type="ordered locus">Tfu_2353</name>
</gene>
<protein>
    <recommendedName>
        <fullName evidence="1">Serine hydroxymethyltransferase</fullName>
        <shortName evidence="1">SHMT</shortName>
        <shortName evidence="1">Serine methylase</shortName>
        <ecNumber evidence="1">2.1.2.1</ecNumber>
    </recommendedName>
</protein>
<comment type="function">
    <text evidence="1">Catalyzes the reversible interconversion of serine and glycine with tetrahydrofolate (THF) serving as the one-carbon carrier. This reaction serves as the major source of one-carbon groups required for the biosynthesis of purines, thymidylate, methionine, and other important biomolecules. Also exhibits THF-independent aldolase activity toward beta-hydroxyamino acids, producing glycine and aldehydes, via a retro-aldol mechanism.</text>
</comment>
<comment type="catalytic activity">
    <reaction evidence="1">
        <text>(6R)-5,10-methylene-5,6,7,8-tetrahydrofolate + glycine + H2O = (6S)-5,6,7,8-tetrahydrofolate + L-serine</text>
        <dbReference type="Rhea" id="RHEA:15481"/>
        <dbReference type="ChEBI" id="CHEBI:15377"/>
        <dbReference type="ChEBI" id="CHEBI:15636"/>
        <dbReference type="ChEBI" id="CHEBI:33384"/>
        <dbReference type="ChEBI" id="CHEBI:57305"/>
        <dbReference type="ChEBI" id="CHEBI:57453"/>
        <dbReference type="EC" id="2.1.2.1"/>
    </reaction>
</comment>
<comment type="cofactor">
    <cofactor evidence="1">
        <name>pyridoxal 5'-phosphate</name>
        <dbReference type="ChEBI" id="CHEBI:597326"/>
    </cofactor>
</comment>
<comment type="pathway">
    <text evidence="1">One-carbon metabolism; tetrahydrofolate interconversion.</text>
</comment>
<comment type="pathway">
    <text evidence="1">Amino-acid biosynthesis; glycine biosynthesis; glycine from L-serine: step 1/1.</text>
</comment>
<comment type="subunit">
    <text evidence="1">Homodimer.</text>
</comment>
<comment type="subcellular location">
    <subcellularLocation>
        <location evidence="1">Cytoplasm</location>
    </subcellularLocation>
</comment>
<comment type="similarity">
    <text evidence="1">Belongs to the SHMT family.</text>
</comment>
<sequence length="423" mass="45104">MTAQSTSLTQSLAQLDPEVAAAVDAELARQRDTLEMIASENFAPRAVLEAQGTVLTNKYAEGYPGRRYYGGCEHVDVIEQLAIDRAKALFGAEHANVQPHSGAQANTAVYFALLQPGDTILGLDLAHGGHLTHGMRINYSGKILNAVAYHVRESDGLIDYDEVEALAKEHQPKLIIAGWSAYPRQLDFARFREIADQTGALLMVDMAHFAGLVAAGLHPNPVPYADVVTTTTHKTLGGPRGGLILAKEELGKKINSAVFPGMQGGPLQHVIAAKAVALKVAASEEFAERQRRTLSGAKILAERLTQPDAAEAGIRVLTGGTDVHLVLVDLVNSELNGKEAEDRLHEIGITVNRNAVPNDPRPPMVTSGLRIGTPALATRGFGDADFAEVADIIAEALKPGFDAATLRSRVQALAAKHPLYPGL</sequence>
<organism>
    <name type="scientific">Thermobifida fusca (strain YX)</name>
    <dbReference type="NCBI Taxonomy" id="269800"/>
    <lineage>
        <taxon>Bacteria</taxon>
        <taxon>Bacillati</taxon>
        <taxon>Actinomycetota</taxon>
        <taxon>Actinomycetes</taxon>
        <taxon>Streptosporangiales</taxon>
        <taxon>Nocardiopsidaceae</taxon>
        <taxon>Thermobifida</taxon>
    </lineage>
</organism>
<name>GLYA_THEFY</name>
<feature type="chain" id="PRO_0000235041" description="Serine hydroxymethyltransferase">
    <location>
        <begin position="1"/>
        <end position="423"/>
    </location>
</feature>
<feature type="binding site" evidence="1">
    <location>
        <position position="125"/>
    </location>
    <ligand>
        <name>(6S)-5,6,7,8-tetrahydrofolate</name>
        <dbReference type="ChEBI" id="CHEBI:57453"/>
    </ligand>
</feature>
<feature type="binding site" evidence="1">
    <location>
        <begin position="129"/>
        <end position="131"/>
    </location>
    <ligand>
        <name>(6S)-5,6,7,8-tetrahydrofolate</name>
        <dbReference type="ChEBI" id="CHEBI:57453"/>
    </ligand>
</feature>
<feature type="binding site" evidence="1">
    <location>
        <position position="249"/>
    </location>
    <ligand>
        <name>(6S)-5,6,7,8-tetrahydrofolate</name>
        <dbReference type="ChEBI" id="CHEBI:57453"/>
    </ligand>
</feature>
<feature type="site" description="Plays an important role in substrate specificity" evidence="1">
    <location>
        <position position="233"/>
    </location>
</feature>
<feature type="modified residue" description="N6-(pyridoxal phosphate)lysine" evidence="1">
    <location>
        <position position="234"/>
    </location>
</feature>
<dbReference type="EC" id="2.1.2.1" evidence="1"/>
<dbReference type="EMBL" id="CP000088">
    <property type="protein sequence ID" value="AAZ56386.1"/>
    <property type="molecule type" value="Genomic_DNA"/>
</dbReference>
<dbReference type="RefSeq" id="WP_011292776.1">
    <property type="nucleotide sequence ID" value="NC_007333.1"/>
</dbReference>
<dbReference type="SMR" id="Q47MD6"/>
<dbReference type="STRING" id="269800.Tfu_2353"/>
<dbReference type="KEGG" id="tfu:Tfu_2353"/>
<dbReference type="eggNOG" id="COG0112">
    <property type="taxonomic scope" value="Bacteria"/>
</dbReference>
<dbReference type="HOGENOM" id="CLU_022477_2_1_11"/>
<dbReference type="OrthoDB" id="9803846at2"/>
<dbReference type="UniPathway" id="UPA00193"/>
<dbReference type="UniPathway" id="UPA00288">
    <property type="reaction ID" value="UER01023"/>
</dbReference>
<dbReference type="GO" id="GO:0005829">
    <property type="term" value="C:cytosol"/>
    <property type="evidence" value="ECO:0007669"/>
    <property type="project" value="TreeGrafter"/>
</dbReference>
<dbReference type="GO" id="GO:0004372">
    <property type="term" value="F:glycine hydroxymethyltransferase activity"/>
    <property type="evidence" value="ECO:0007669"/>
    <property type="project" value="UniProtKB-UniRule"/>
</dbReference>
<dbReference type="GO" id="GO:0030170">
    <property type="term" value="F:pyridoxal phosphate binding"/>
    <property type="evidence" value="ECO:0007669"/>
    <property type="project" value="UniProtKB-UniRule"/>
</dbReference>
<dbReference type="GO" id="GO:0019264">
    <property type="term" value="P:glycine biosynthetic process from serine"/>
    <property type="evidence" value="ECO:0007669"/>
    <property type="project" value="UniProtKB-UniRule"/>
</dbReference>
<dbReference type="GO" id="GO:0035999">
    <property type="term" value="P:tetrahydrofolate interconversion"/>
    <property type="evidence" value="ECO:0007669"/>
    <property type="project" value="UniProtKB-UniRule"/>
</dbReference>
<dbReference type="CDD" id="cd00378">
    <property type="entry name" value="SHMT"/>
    <property type="match status" value="1"/>
</dbReference>
<dbReference type="FunFam" id="3.40.640.10:FF:000001">
    <property type="entry name" value="Serine hydroxymethyltransferase"/>
    <property type="match status" value="1"/>
</dbReference>
<dbReference type="Gene3D" id="3.90.1150.10">
    <property type="entry name" value="Aspartate Aminotransferase, domain 1"/>
    <property type="match status" value="1"/>
</dbReference>
<dbReference type="Gene3D" id="3.40.640.10">
    <property type="entry name" value="Type I PLP-dependent aspartate aminotransferase-like (Major domain)"/>
    <property type="match status" value="1"/>
</dbReference>
<dbReference type="HAMAP" id="MF_00051">
    <property type="entry name" value="SHMT"/>
    <property type="match status" value="1"/>
</dbReference>
<dbReference type="InterPro" id="IPR015424">
    <property type="entry name" value="PyrdxlP-dep_Trfase"/>
</dbReference>
<dbReference type="InterPro" id="IPR015421">
    <property type="entry name" value="PyrdxlP-dep_Trfase_major"/>
</dbReference>
<dbReference type="InterPro" id="IPR015422">
    <property type="entry name" value="PyrdxlP-dep_Trfase_small"/>
</dbReference>
<dbReference type="InterPro" id="IPR001085">
    <property type="entry name" value="Ser_HO-MeTrfase"/>
</dbReference>
<dbReference type="InterPro" id="IPR049943">
    <property type="entry name" value="Ser_HO-MeTrfase-like"/>
</dbReference>
<dbReference type="InterPro" id="IPR019798">
    <property type="entry name" value="Ser_HO-MeTrfase_PLP_BS"/>
</dbReference>
<dbReference type="InterPro" id="IPR039429">
    <property type="entry name" value="SHMT-like_dom"/>
</dbReference>
<dbReference type="NCBIfam" id="NF000586">
    <property type="entry name" value="PRK00011.1"/>
    <property type="match status" value="1"/>
</dbReference>
<dbReference type="PANTHER" id="PTHR11680">
    <property type="entry name" value="SERINE HYDROXYMETHYLTRANSFERASE"/>
    <property type="match status" value="1"/>
</dbReference>
<dbReference type="PANTHER" id="PTHR11680:SF35">
    <property type="entry name" value="SERINE HYDROXYMETHYLTRANSFERASE 1"/>
    <property type="match status" value="1"/>
</dbReference>
<dbReference type="Pfam" id="PF00464">
    <property type="entry name" value="SHMT"/>
    <property type="match status" value="1"/>
</dbReference>
<dbReference type="PIRSF" id="PIRSF000412">
    <property type="entry name" value="SHMT"/>
    <property type="match status" value="1"/>
</dbReference>
<dbReference type="SUPFAM" id="SSF53383">
    <property type="entry name" value="PLP-dependent transferases"/>
    <property type="match status" value="1"/>
</dbReference>
<dbReference type="PROSITE" id="PS00096">
    <property type="entry name" value="SHMT"/>
    <property type="match status" value="1"/>
</dbReference>
<evidence type="ECO:0000255" key="1">
    <source>
        <dbReference type="HAMAP-Rule" id="MF_00051"/>
    </source>
</evidence>
<proteinExistence type="inferred from homology"/>